<reference key="1">
    <citation type="submission" date="2007-05" db="EMBL/GenBank/DDBJ databases">
        <title>Complete sequence of Thermotoga petrophila RKU-1.</title>
        <authorList>
            <consortium name="US DOE Joint Genome Institute"/>
            <person name="Copeland A."/>
            <person name="Lucas S."/>
            <person name="Lapidus A."/>
            <person name="Barry K."/>
            <person name="Glavina del Rio T."/>
            <person name="Dalin E."/>
            <person name="Tice H."/>
            <person name="Pitluck S."/>
            <person name="Sims D."/>
            <person name="Brettin T."/>
            <person name="Bruce D."/>
            <person name="Detter J.C."/>
            <person name="Han C."/>
            <person name="Tapia R."/>
            <person name="Schmutz J."/>
            <person name="Larimer F."/>
            <person name="Land M."/>
            <person name="Hauser L."/>
            <person name="Kyrpides N."/>
            <person name="Mikhailova N."/>
            <person name="Nelson K."/>
            <person name="Gogarten J.P."/>
            <person name="Noll K."/>
            <person name="Richardson P."/>
        </authorList>
    </citation>
    <scope>NUCLEOTIDE SEQUENCE [LARGE SCALE GENOMIC DNA]</scope>
    <source>
        <strain>ATCC BAA-488 / DSM 13995 / JCM 10881 / RKU-1</strain>
    </source>
</reference>
<evidence type="ECO:0000255" key="1">
    <source>
        <dbReference type="HAMAP-Rule" id="MF_00338"/>
    </source>
</evidence>
<proteinExistence type="inferred from homology"/>
<protein>
    <recommendedName>
        <fullName evidence="1">UPF0145 protein Tpet_0165</fullName>
    </recommendedName>
</protein>
<name>Y165_THEP1</name>
<comment type="similarity">
    <text evidence="1">Belongs to the UPF0145 family.</text>
</comment>
<organism>
    <name type="scientific">Thermotoga petrophila (strain ATCC BAA-488 / DSM 13995 / JCM 10881 / RKU-1)</name>
    <dbReference type="NCBI Taxonomy" id="390874"/>
    <lineage>
        <taxon>Bacteria</taxon>
        <taxon>Thermotogati</taxon>
        <taxon>Thermotogota</taxon>
        <taxon>Thermotogae</taxon>
        <taxon>Thermotogales</taxon>
        <taxon>Thermotogaceae</taxon>
        <taxon>Thermotoga</taxon>
    </lineage>
</organism>
<accession>A5IJ21</accession>
<gene>
    <name type="ordered locus">Tpet_0165</name>
</gene>
<sequence>MIITTTEQVPGYRVKEILGVVCGNVVMSKHLGKDIAAAFKTLAGGEIKGYTEMLTEARNIALERMIKEAEKLGADAVIGFRYSSSTIMSGAAEILAYGTAVKLEKI</sequence>
<feature type="chain" id="PRO_1000013036" description="UPF0145 protein Tpet_0165">
    <location>
        <begin position="1"/>
        <end position="106"/>
    </location>
</feature>
<dbReference type="EMBL" id="CP000702">
    <property type="protein sequence ID" value="ABQ46194.1"/>
    <property type="molecule type" value="Genomic_DNA"/>
</dbReference>
<dbReference type="RefSeq" id="WP_011942855.1">
    <property type="nucleotide sequence ID" value="NC_009486.1"/>
</dbReference>
<dbReference type="SMR" id="A5IJ21"/>
<dbReference type="STRING" id="390874.Tpet_0165"/>
<dbReference type="KEGG" id="tpt:Tpet_0165"/>
<dbReference type="eggNOG" id="COG0393">
    <property type="taxonomic scope" value="Bacteria"/>
</dbReference>
<dbReference type="HOGENOM" id="CLU_117144_1_2_0"/>
<dbReference type="Proteomes" id="UP000006558">
    <property type="component" value="Chromosome"/>
</dbReference>
<dbReference type="Gene3D" id="3.30.110.70">
    <property type="entry name" value="Hypothetical protein apc22750. Chain B"/>
    <property type="match status" value="1"/>
</dbReference>
<dbReference type="HAMAP" id="MF_00338">
    <property type="entry name" value="UPF0145"/>
    <property type="match status" value="1"/>
</dbReference>
<dbReference type="InterPro" id="IPR035439">
    <property type="entry name" value="UPF0145_dom_sf"/>
</dbReference>
<dbReference type="InterPro" id="IPR002765">
    <property type="entry name" value="UPF0145_YbjQ-like"/>
</dbReference>
<dbReference type="PANTHER" id="PTHR34068:SF2">
    <property type="entry name" value="UPF0145 PROTEIN SCO3412"/>
    <property type="match status" value="1"/>
</dbReference>
<dbReference type="PANTHER" id="PTHR34068">
    <property type="entry name" value="UPF0145 PROTEIN YBJQ"/>
    <property type="match status" value="1"/>
</dbReference>
<dbReference type="Pfam" id="PF01906">
    <property type="entry name" value="YbjQ_1"/>
    <property type="match status" value="1"/>
</dbReference>
<dbReference type="SUPFAM" id="SSF117782">
    <property type="entry name" value="YbjQ-like"/>
    <property type="match status" value="1"/>
</dbReference>